<comment type="function">
    <text evidence="1">Forms oxaloacetate, a four-carbon dicarboxylic acid source for the tricarboxylic acid cycle.</text>
</comment>
<comment type="catalytic activity">
    <reaction evidence="1">
        <text>oxaloacetate + phosphate = phosphoenolpyruvate + hydrogencarbonate</text>
        <dbReference type="Rhea" id="RHEA:28370"/>
        <dbReference type="ChEBI" id="CHEBI:16452"/>
        <dbReference type="ChEBI" id="CHEBI:17544"/>
        <dbReference type="ChEBI" id="CHEBI:43474"/>
        <dbReference type="ChEBI" id="CHEBI:58702"/>
        <dbReference type="EC" id="4.1.1.31"/>
    </reaction>
</comment>
<comment type="cofactor">
    <cofactor evidence="1">
        <name>Mg(2+)</name>
        <dbReference type="ChEBI" id="CHEBI:18420"/>
    </cofactor>
</comment>
<comment type="similarity">
    <text evidence="1">Belongs to the PEPCase type 1 family.</text>
</comment>
<feature type="chain" id="PRO_0000166619" description="Phosphoenolpyruvate carboxylase">
    <location>
        <begin position="1"/>
        <end position="883"/>
    </location>
</feature>
<feature type="active site" evidence="1">
    <location>
        <position position="138"/>
    </location>
</feature>
<feature type="active site" evidence="1">
    <location>
        <position position="546"/>
    </location>
</feature>
<gene>
    <name evidence="1" type="primary">ppc</name>
    <name type="ordered locus">SCH_4009</name>
</gene>
<evidence type="ECO:0000255" key="1">
    <source>
        <dbReference type="HAMAP-Rule" id="MF_00595"/>
    </source>
</evidence>
<organism>
    <name type="scientific">Salmonella choleraesuis (strain SC-B67)</name>
    <dbReference type="NCBI Taxonomy" id="321314"/>
    <lineage>
        <taxon>Bacteria</taxon>
        <taxon>Pseudomonadati</taxon>
        <taxon>Pseudomonadota</taxon>
        <taxon>Gammaproteobacteria</taxon>
        <taxon>Enterobacterales</taxon>
        <taxon>Enterobacteriaceae</taxon>
        <taxon>Salmonella</taxon>
    </lineage>
</organism>
<keyword id="KW-0120">Carbon dioxide fixation</keyword>
<keyword id="KW-0456">Lyase</keyword>
<keyword id="KW-0460">Magnesium</keyword>
<accession>Q57H97</accession>
<protein>
    <recommendedName>
        <fullName evidence="1">Phosphoenolpyruvate carboxylase</fullName>
        <shortName evidence="1">PEPC</shortName>
        <shortName evidence="1">PEPCase</shortName>
        <ecNumber evidence="1">4.1.1.31</ecNumber>
    </recommendedName>
</protein>
<reference key="1">
    <citation type="journal article" date="2005" name="Nucleic Acids Res.">
        <title>The genome sequence of Salmonella enterica serovar Choleraesuis, a highly invasive and resistant zoonotic pathogen.</title>
        <authorList>
            <person name="Chiu C.-H."/>
            <person name="Tang P."/>
            <person name="Chu C."/>
            <person name="Hu S."/>
            <person name="Bao Q."/>
            <person name="Yu J."/>
            <person name="Chou Y.-Y."/>
            <person name="Wang H.-S."/>
            <person name="Lee Y.-S."/>
        </authorList>
    </citation>
    <scope>NUCLEOTIDE SEQUENCE [LARGE SCALE GENOMIC DNA]</scope>
    <source>
        <strain>SC-B67</strain>
    </source>
</reference>
<name>CAPP_SALCH</name>
<dbReference type="EC" id="4.1.1.31" evidence="1"/>
<dbReference type="EMBL" id="AE017220">
    <property type="protein sequence ID" value="AAX67915.1"/>
    <property type="molecule type" value="Genomic_DNA"/>
</dbReference>
<dbReference type="RefSeq" id="WP_001541264.1">
    <property type="nucleotide sequence ID" value="NC_006905.1"/>
</dbReference>
<dbReference type="SMR" id="Q57H97"/>
<dbReference type="KEGG" id="sec:SCH_4009"/>
<dbReference type="HOGENOM" id="CLU_006557_2_0_6"/>
<dbReference type="Proteomes" id="UP000000538">
    <property type="component" value="Chromosome"/>
</dbReference>
<dbReference type="GO" id="GO:0005829">
    <property type="term" value="C:cytosol"/>
    <property type="evidence" value="ECO:0007669"/>
    <property type="project" value="TreeGrafter"/>
</dbReference>
<dbReference type="GO" id="GO:0000287">
    <property type="term" value="F:magnesium ion binding"/>
    <property type="evidence" value="ECO:0007669"/>
    <property type="project" value="UniProtKB-UniRule"/>
</dbReference>
<dbReference type="GO" id="GO:0008964">
    <property type="term" value="F:phosphoenolpyruvate carboxylase activity"/>
    <property type="evidence" value="ECO:0007669"/>
    <property type="project" value="UniProtKB-UniRule"/>
</dbReference>
<dbReference type="GO" id="GO:0015977">
    <property type="term" value="P:carbon fixation"/>
    <property type="evidence" value="ECO:0007669"/>
    <property type="project" value="UniProtKB-UniRule"/>
</dbReference>
<dbReference type="GO" id="GO:0006107">
    <property type="term" value="P:oxaloacetate metabolic process"/>
    <property type="evidence" value="ECO:0007669"/>
    <property type="project" value="UniProtKB-UniRule"/>
</dbReference>
<dbReference type="GO" id="GO:0006099">
    <property type="term" value="P:tricarboxylic acid cycle"/>
    <property type="evidence" value="ECO:0007669"/>
    <property type="project" value="InterPro"/>
</dbReference>
<dbReference type="FunFam" id="1.20.1440.90:FF:000002">
    <property type="entry name" value="Phosphoenolpyruvate carboxylase"/>
    <property type="match status" value="1"/>
</dbReference>
<dbReference type="Gene3D" id="1.20.1440.90">
    <property type="entry name" value="Phosphoenolpyruvate/pyruvate domain"/>
    <property type="match status" value="1"/>
</dbReference>
<dbReference type="HAMAP" id="MF_00595">
    <property type="entry name" value="PEPcase_type1"/>
    <property type="match status" value="1"/>
</dbReference>
<dbReference type="InterPro" id="IPR021135">
    <property type="entry name" value="PEP_COase"/>
</dbReference>
<dbReference type="InterPro" id="IPR022805">
    <property type="entry name" value="PEP_COase_bac/pln-type"/>
</dbReference>
<dbReference type="InterPro" id="IPR018129">
    <property type="entry name" value="PEP_COase_Lys_AS"/>
</dbReference>
<dbReference type="InterPro" id="IPR033129">
    <property type="entry name" value="PEPCASE_His_AS"/>
</dbReference>
<dbReference type="InterPro" id="IPR015813">
    <property type="entry name" value="Pyrv/PenolPyrv_kinase-like_dom"/>
</dbReference>
<dbReference type="NCBIfam" id="NF000584">
    <property type="entry name" value="PRK00009.1"/>
    <property type="match status" value="1"/>
</dbReference>
<dbReference type="PANTHER" id="PTHR30523">
    <property type="entry name" value="PHOSPHOENOLPYRUVATE CARBOXYLASE"/>
    <property type="match status" value="1"/>
</dbReference>
<dbReference type="PANTHER" id="PTHR30523:SF6">
    <property type="entry name" value="PHOSPHOENOLPYRUVATE CARBOXYLASE"/>
    <property type="match status" value="1"/>
</dbReference>
<dbReference type="Pfam" id="PF00311">
    <property type="entry name" value="PEPcase"/>
    <property type="match status" value="1"/>
</dbReference>
<dbReference type="PRINTS" id="PR00150">
    <property type="entry name" value="PEPCARBXLASE"/>
</dbReference>
<dbReference type="SUPFAM" id="SSF51621">
    <property type="entry name" value="Phosphoenolpyruvate/pyruvate domain"/>
    <property type="match status" value="1"/>
</dbReference>
<dbReference type="PROSITE" id="PS00781">
    <property type="entry name" value="PEPCASE_1"/>
    <property type="match status" value="1"/>
</dbReference>
<dbReference type="PROSITE" id="PS00393">
    <property type="entry name" value="PEPCASE_2"/>
    <property type="match status" value="1"/>
</dbReference>
<sequence length="883" mass="98969">MNEQYSALRSNVSMLGKVLGETIKDALGEHILDRVETIRKLSKSSRAGNEANRQELLTTLQNLSNDELLPVARAFSQFLNLANTAEQYHSISPKGEAASNPEVIARTLRKLKNQPDLNDATIKKAVESLSLELVLTAHPTEITRRTLIHKMGEINNCLKQLDNTDIADYERHQVMRRLRQLIAQSWHTDEIRKQRPSPVDEAKWGFAVVENSLWQGVPNYLRELNEQLEENLGYKLPVDFVPVRFTSWMGGDRDGNPNVTADITRHVLLLSRWKATDLFLKDIHVLVSELSMVDATPELLALVGEEGASEPYRYLMKKLRARLMATQSWLEARLKGEKLPKPAGLLTQNEQLWEPLYACYQSLQACGMGIIANGELLDTLRRVKCFGVPLVRIDIRQESTRHTEALGEITRYLGIGDYESWSEADKQALLIRELNSKRPLLPRNWEPSNDTREVLETCKVIAEAPKGSIAAYVISMAKTPSDVLAVHLLLKEAGIGFAMPVAPLFETLDDLNNADDVMTQLLNIDWYRGLIQGKQMVMIGYSDSAKDAGVMAASWAQYQAQDALIKTCEKAGIELTLFHGRGGSIGRGGAPAHAALLSQPPGSLKGGLRVTEQGEMIRFKYGLPEVTVSSLSLYTSAILEANLLPPPEPKDSWRHIMDELSVISCETYRGYVRENKDFVPYFRSATPEQELGKLPLGSRPAKRRPTGGVESLRAIPWIFAWTQNRLMLPAWLGAGTALQKVVEDGKQSELEAMCRDWPFFSTRLGMLEMVFSKADLWLADYYDQRLVAKTLWPLGKELRDLLEEDIKVVLAIANDSHLMADLPWIAESIQLRNVYTDPLNVLQAELLYRSRLTEEQGKSPDPRVEQALMVTIAGVAAGMRNTG</sequence>
<proteinExistence type="inferred from homology"/>